<sequence length="175" mass="18860">MRRQRSAVPILALLALLALLALIVGLGASGCAWKPPTTRPSPPNTCKDSDGPTADTVRQAIAAVPIVVPGSKWVEITRGHTRNCRLHWVQIIPTIASQSTPQQLLFFDRNIPLGSPTRNPKPYITVLPAGDDTVTVQYQWQIGSDQECCPTGIGTVRFHIGSDGKLEALGSIPHQ</sequence>
<proteinExistence type="inferred from homology"/>
<evidence type="ECO:0000255" key="1">
    <source>
        <dbReference type="PROSITE-ProRule" id="PRU00303"/>
    </source>
</evidence>
<gene>
    <name type="primary">lppP</name>
    <name type="ordered locus">MT2392</name>
</gene>
<feature type="signal peptide" evidence="1">
    <location>
        <begin position="1"/>
        <end position="30"/>
    </location>
</feature>
<feature type="chain" id="PRO_0000427706" description="Putative lipoprotein LppP">
    <location>
        <begin position="31"/>
        <end position="175"/>
    </location>
</feature>
<feature type="lipid moiety-binding region" description="N-palmitoyl cysteine" evidence="1">
    <location>
        <position position="31"/>
    </location>
</feature>
<feature type="lipid moiety-binding region" description="S-diacylglycerol cysteine" evidence="1">
    <location>
        <position position="31"/>
    </location>
</feature>
<reference key="1">
    <citation type="journal article" date="2002" name="J. Bacteriol.">
        <title>Whole-genome comparison of Mycobacterium tuberculosis clinical and laboratory strains.</title>
        <authorList>
            <person name="Fleischmann R.D."/>
            <person name="Alland D."/>
            <person name="Eisen J.A."/>
            <person name="Carpenter L."/>
            <person name="White O."/>
            <person name="Peterson J.D."/>
            <person name="DeBoy R.T."/>
            <person name="Dodson R.J."/>
            <person name="Gwinn M.L."/>
            <person name="Haft D.H."/>
            <person name="Hickey E.K."/>
            <person name="Kolonay J.F."/>
            <person name="Nelson W.C."/>
            <person name="Umayam L.A."/>
            <person name="Ermolaeva M.D."/>
            <person name="Salzberg S.L."/>
            <person name="Delcher A."/>
            <person name="Utterback T.R."/>
            <person name="Weidman J.F."/>
            <person name="Khouri H.M."/>
            <person name="Gill J."/>
            <person name="Mikula A."/>
            <person name="Bishai W."/>
            <person name="Jacobs W.R. Jr."/>
            <person name="Venter J.C."/>
            <person name="Fraser C.M."/>
        </authorList>
    </citation>
    <scope>NUCLEOTIDE SEQUENCE [LARGE SCALE GENOMIC DNA]</scope>
    <source>
        <strain>CDC 1551 / Oshkosh</strain>
    </source>
</reference>
<protein>
    <recommendedName>
        <fullName>Putative lipoprotein LppP</fullName>
    </recommendedName>
</protein>
<dbReference type="EMBL" id="AE000516">
    <property type="protein sequence ID" value="AAK46684.1"/>
    <property type="molecule type" value="Genomic_DNA"/>
</dbReference>
<dbReference type="PIR" id="C70705">
    <property type="entry name" value="C70705"/>
</dbReference>
<dbReference type="RefSeq" id="WP_003411974.1">
    <property type="nucleotide sequence ID" value="NZ_KK341227.1"/>
</dbReference>
<dbReference type="KEGG" id="mtc:MT2392"/>
<dbReference type="PATRIC" id="fig|83331.31.peg.2578"/>
<dbReference type="HOGENOM" id="CLU_142832_0_0_11"/>
<dbReference type="Proteomes" id="UP000001020">
    <property type="component" value="Chromosome"/>
</dbReference>
<dbReference type="GO" id="GO:0005886">
    <property type="term" value="C:plasma membrane"/>
    <property type="evidence" value="ECO:0007669"/>
    <property type="project" value="UniProtKB-SubCell"/>
</dbReference>
<dbReference type="InterPro" id="IPR025971">
    <property type="entry name" value="LppP/LprE"/>
</dbReference>
<dbReference type="Pfam" id="PF14041">
    <property type="entry name" value="Lipoprotein_21"/>
    <property type="match status" value="1"/>
</dbReference>
<dbReference type="PROSITE" id="PS51257">
    <property type="entry name" value="PROKAR_LIPOPROTEIN"/>
    <property type="match status" value="1"/>
</dbReference>
<organism>
    <name type="scientific">Mycobacterium tuberculosis (strain CDC 1551 / Oshkosh)</name>
    <dbReference type="NCBI Taxonomy" id="83331"/>
    <lineage>
        <taxon>Bacteria</taxon>
        <taxon>Bacillati</taxon>
        <taxon>Actinomycetota</taxon>
        <taxon>Actinomycetes</taxon>
        <taxon>Mycobacteriales</taxon>
        <taxon>Mycobacteriaceae</taxon>
        <taxon>Mycobacterium</taxon>
        <taxon>Mycobacterium tuberculosis complex</taxon>
    </lineage>
</organism>
<keyword id="KW-1003">Cell membrane</keyword>
<keyword id="KW-0449">Lipoprotein</keyword>
<keyword id="KW-0472">Membrane</keyword>
<keyword id="KW-0564">Palmitate</keyword>
<keyword id="KW-1185">Reference proteome</keyword>
<keyword id="KW-0732">Signal</keyword>
<accession>P9WK68</accession>
<accession>L0TC03</accession>
<accession>P65302</accession>
<accession>P71882</accession>
<name>LPPP_MYCTO</name>
<comment type="subcellular location">
    <subcellularLocation>
        <location evidence="1">Cell membrane</location>
        <topology evidence="1">Lipid-anchor</topology>
    </subcellularLocation>
</comment>